<feature type="chain" id="PRO_1000077669" description="GTPase Der">
    <location>
        <begin position="1"/>
        <end position="467"/>
    </location>
</feature>
<feature type="domain" description="EngA-type G 1">
    <location>
        <begin position="25"/>
        <end position="188"/>
    </location>
</feature>
<feature type="domain" description="EngA-type G 2">
    <location>
        <begin position="199"/>
        <end position="372"/>
    </location>
</feature>
<feature type="domain" description="KH-like" evidence="1">
    <location>
        <begin position="373"/>
        <end position="455"/>
    </location>
</feature>
<feature type="binding site" evidence="1">
    <location>
        <begin position="31"/>
        <end position="38"/>
    </location>
    <ligand>
        <name>GTP</name>
        <dbReference type="ChEBI" id="CHEBI:37565"/>
        <label>1</label>
    </ligand>
</feature>
<feature type="binding site" evidence="1">
    <location>
        <begin position="78"/>
        <end position="82"/>
    </location>
    <ligand>
        <name>GTP</name>
        <dbReference type="ChEBI" id="CHEBI:37565"/>
        <label>1</label>
    </ligand>
</feature>
<feature type="binding site" evidence="1">
    <location>
        <begin position="140"/>
        <end position="143"/>
    </location>
    <ligand>
        <name>GTP</name>
        <dbReference type="ChEBI" id="CHEBI:37565"/>
        <label>1</label>
    </ligand>
</feature>
<feature type="binding site" evidence="1">
    <location>
        <begin position="205"/>
        <end position="212"/>
    </location>
    <ligand>
        <name>GTP</name>
        <dbReference type="ChEBI" id="CHEBI:37565"/>
        <label>2</label>
    </ligand>
</feature>
<feature type="binding site" evidence="1">
    <location>
        <begin position="252"/>
        <end position="256"/>
    </location>
    <ligand>
        <name>GTP</name>
        <dbReference type="ChEBI" id="CHEBI:37565"/>
        <label>2</label>
    </ligand>
</feature>
<feature type="binding site" evidence="1">
    <location>
        <begin position="317"/>
        <end position="320"/>
    </location>
    <ligand>
        <name>GTP</name>
        <dbReference type="ChEBI" id="CHEBI:37565"/>
        <label>2</label>
    </ligand>
</feature>
<dbReference type="EMBL" id="CP000850">
    <property type="protein sequence ID" value="ABV97806.1"/>
    <property type="molecule type" value="Genomic_DNA"/>
</dbReference>
<dbReference type="SMR" id="A8LYU3"/>
<dbReference type="STRING" id="391037.Sare_1921"/>
<dbReference type="KEGG" id="saq:Sare_1921"/>
<dbReference type="PATRIC" id="fig|391037.6.peg.1950"/>
<dbReference type="eggNOG" id="COG1160">
    <property type="taxonomic scope" value="Bacteria"/>
</dbReference>
<dbReference type="HOGENOM" id="CLU_016077_6_2_11"/>
<dbReference type="OrthoDB" id="9805918at2"/>
<dbReference type="GO" id="GO:0016887">
    <property type="term" value="F:ATP hydrolysis activity"/>
    <property type="evidence" value="ECO:0007669"/>
    <property type="project" value="InterPro"/>
</dbReference>
<dbReference type="GO" id="GO:0005525">
    <property type="term" value="F:GTP binding"/>
    <property type="evidence" value="ECO:0007669"/>
    <property type="project" value="UniProtKB-UniRule"/>
</dbReference>
<dbReference type="GO" id="GO:0043022">
    <property type="term" value="F:ribosome binding"/>
    <property type="evidence" value="ECO:0007669"/>
    <property type="project" value="TreeGrafter"/>
</dbReference>
<dbReference type="GO" id="GO:0042254">
    <property type="term" value="P:ribosome biogenesis"/>
    <property type="evidence" value="ECO:0007669"/>
    <property type="project" value="UniProtKB-KW"/>
</dbReference>
<dbReference type="CDD" id="cd01894">
    <property type="entry name" value="EngA1"/>
    <property type="match status" value="1"/>
</dbReference>
<dbReference type="CDD" id="cd01895">
    <property type="entry name" value="EngA2"/>
    <property type="match status" value="1"/>
</dbReference>
<dbReference type="FunFam" id="3.30.300.20:FF:000004">
    <property type="entry name" value="GTPase Der"/>
    <property type="match status" value="1"/>
</dbReference>
<dbReference type="FunFam" id="3.40.50.300:FF:000040">
    <property type="entry name" value="GTPase Der"/>
    <property type="match status" value="1"/>
</dbReference>
<dbReference type="FunFam" id="3.40.50.300:FF:000057">
    <property type="entry name" value="GTPase Der"/>
    <property type="match status" value="1"/>
</dbReference>
<dbReference type="Gene3D" id="3.30.300.20">
    <property type="match status" value="1"/>
</dbReference>
<dbReference type="Gene3D" id="3.40.50.300">
    <property type="entry name" value="P-loop containing nucleotide triphosphate hydrolases"/>
    <property type="match status" value="2"/>
</dbReference>
<dbReference type="HAMAP" id="MF_00195">
    <property type="entry name" value="GTPase_Der"/>
    <property type="match status" value="1"/>
</dbReference>
<dbReference type="InterPro" id="IPR003593">
    <property type="entry name" value="AAA+_ATPase"/>
</dbReference>
<dbReference type="InterPro" id="IPR031166">
    <property type="entry name" value="G_ENGA"/>
</dbReference>
<dbReference type="InterPro" id="IPR006073">
    <property type="entry name" value="GTP-bd"/>
</dbReference>
<dbReference type="InterPro" id="IPR016484">
    <property type="entry name" value="GTPase_Der"/>
</dbReference>
<dbReference type="InterPro" id="IPR032859">
    <property type="entry name" value="KH_dom-like"/>
</dbReference>
<dbReference type="InterPro" id="IPR015946">
    <property type="entry name" value="KH_dom-like_a/b"/>
</dbReference>
<dbReference type="InterPro" id="IPR027417">
    <property type="entry name" value="P-loop_NTPase"/>
</dbReference>
<dbReference type="InterPro" id="IPR005225">
    <property type="entry name" value="Small_GTP-bd"/>
</dbReference>
<dbReference type="NCBIfam" id="TIGR03594">
    <property type="entry name" value="GTPase_EngA"/>
    <property type="match status" value="1"/>
</dbReference>
<dbReference type="NCBIfam" id="NF002828">
    <property type="entry name" value="PRK03003.1"/>
    <property type="match status" value="1"/>
</dbReference>
<dbReference type="NCBIfam" id="TIGR00231">
    <property type="entry name" value="small_GTP"/>
    <property type="match status" value="2"/>
</dbReference>
<dbReference type="PANTHER" id="PTHR43834">
    <property type="entry name" value="GTPASE DER"/>
    <property type="match status" value="1"/>
</dbReference>
<dbReference type="PANTHER" id="PTHR43834:SF6">
    <property type="entry name" value="GTPASE DER"/>
    <property type="match status" value="1"/>
</dbReference>
<dbReference type="Pfam" id="PF14714">
    <property type="entry name" value="KH_dom-like"/>
    <property type="match status" value="1"/>
</dbReference>
<dbReference type="Pfam" id="PF01926">
    <property type="entry name" value="MMR_HSR1"/>
    <property type="match status" value="2"/>
</dbReference>
<dbReference type="PIRSF" id="PIRSF006485">
    <property type="entry name" value="GTP-binding_EngA"/>
    <property type="match status" value="1"/>
</dbReference>
<dbReference type="PRINTS" id="PR00326">
    <property type="entry name" value="GTP1OBG"/>
</dbReference>
<dbReference type="SMART" id="SM00382">
    <property type="entry name" value="AAA"/>
    <property type="match status" value="2"/>
</dbReference>
<dbReference type="SUPFAM" id="SSF52540">
    <property type="entry name" value="P-loop containing nucleoside triphosphate hydrolases"/>
    <property type="match status" value="2"/>
</dbReference>
<dbReference type="PROSITE" id="PS51712">
    <property type="entry name" value="G_ENGA"/>
    <property type="match status" value="2"/>
</dbReference>
<organism>
    <name type="scientific">Salinispora arenicola (strain CNS-205)</name>
    <dbReference type="NCBI Taxonomy" id="391037"/>
    <lineage>
        <taxon>Bacteria</taxon>
        <taxon>Bacillati</taxon>
        <taxon>Actinomycetota</taxon>
        <taxon>Actinomycetes</taxon>
        <taxon>Micromonosporales</taxon>
        <taxon>Micromonosporaceae</taxon>
        <taxon>Salinispora</taxon>
    </lineage>
</organism>
<reference key="1">
    <citation type="submission" date="2007-10" db="EMBL/GenBank/DDBJ databases">
        <title>Complete sequence of Salinispora arenicola CNS-205.</title>
        <authorList>
            <consortium name="US DOE Joint Genome Institute"/>
            <person name="Copeland A."/>
            <person name="Lucas S."/>
            <person name="Lapidus A."/>
            <person name="Barry K."/>
            <person name="Glavina del Rio T."/>
            <person name="Dalin E."/>
            <person name="Tice H."/>
            <person name="Pitluck S."/>
            <person name="Foster B."/>
            <person name="Schmutz J."/>
            <person name="Larimer F."/>
            <person name="Land M."/>
            <person name="Hauser L."/>
            <person name="Kyrpides N."/>
            <person name="Ivanova N."/>
            <person name="Jensen P.R."/>
            <person name="Moore B.S."/>
            <person name="Penn K."/>
            <person name="Jenkins C."/>
            <person name="Udwary D."/>
            <person name="Xiang L."/>
            <person name="Gontang E."/>
            <person name="Richardson P."/>
        </authorList>
    </citation>
    <scope>NUCLEOTIDE SEQUENCE [LARGE SCALE GENOMIC DNA]</scope>
    <source>
        <strain>CNS-205</strain>
    </source>
</reference>
<name>DER_SALAI</name>
<protein>
    <recommendedName>
        <fullName evidence="1">GTPase Der</fullName>
    </recommendedName>
    <alternativeName>
        <fullName evidence="1">GTP-binding protein EngA</fullName>
    </alternativeName>
</protein>
<accession>A8LYU3</accession>
<gene>
    <name evidence="1" type="primary">der</name>
    <name type="synonym">engA</name>
    <name type="ordered locus">Sare_1921</name>
</gene>
<proteinExistence type="inferred from homology"/>
<keyword id="KW-0342">GTP-binding</keyword>
<keyword id="KW-0547">Nucleotide-binding</keyword>
<keyword id="KW-0677">Repeat</keyword>
<keyword id="KW-0690">Ribosome biogenesis</keyword>
<comment type="function">
    <text evidence="1">GTPase that plays an essential role in the late steps of ribosome biogenesis.</text>
</comment>
<comment type="subunit">
    <text evidence="1">Associates with the 50S ribosomal subunit.</text>
</comment>
<comment type="similarity">
    <text evidence="1">Belongs to the TRAFAC class TrmE-Era-EngA-EngB-Septin-like GTPase superfamily. EngA (Der) GTPase family.</text>
</comment>
<sequence>MSEPNGWVELDVPEPDAEEFTGPQPVVAVVGRPNVGKSTLVNRLIGRRQAVVEDVPGVTRDRVPYDAQWNGRQFAVVDTGGWEPDAKDRAAAIAAQAETAVTTADVVLFVVDAVVGATDVDESAVKMLRRSAKPVILVANKADNSSIEMEAATLWSLGLGEPYPVSALHGRGSGELLDVIMDRLPEAPKIIEDRPRGPRRVALVGRPNVGKSSLLNRFSGEVRAVVDAVAGTTVDPVDSLVEIGGEAWQLVDTAGLRKRVGKASGTEYYASLRTASAIEAAEVAVVLLDASEVISEQDQRILSMVTDAGRALVIAFNKWDLVDADRRYYLDREIERELRRIPWAIRLNLSAKTGRAVDKLAPALRKALASWETRVPTAQLNAWLTALVQATPHPVRGGRAPKILFATQAGAAPPRFVLFTSGPLDAGYQRFVERKLREEFGFEGSPIEIAVRPRKKVGPGGRGKAHG</sequence>
<evidence type="ECO:0000255" key="1">
    <source>
        <dbReference type="HAMAP-Rule" id="MF_00195"/>
    </source>
</evidence>